<feature type="chain" id="PRO_0000189159" description="1-deoxy-D-xylulose-5-phosphate synthase">
    <location>
        <begin position="1"/>
        <end position="638"/>
    </location>
</feature>
<feature type="binding site" evidence="1">
    <location>
        <position position="72"/>
    </location>
    <ligand>
        <name>thiamine diphosphate</name>
        <dbReference type="ChEBI" id="CHEBI:58937"/>
    </ligand>
</feature>
<feature type="binding site" evidence="1">
    <location>
        <begin position="113"/>
        <end position="115"/>
    </location>
    <ligand>
        <name>thiamine diphosphate</name>
        <dbReference type="ChEBI" id="CHEBI:58937"/>
    </ligand>
</feature>
<feature type="binding site" evidence="1">
    <location>
        <position position="144"/>
    </location>
    <ligand>
        <name>Mg(2+)</name>
        <dbReference type="ChEBI" id="CHEBI:18420"/>
    </ligand>
</feature>
<feature type="binding site" evidence="1">
    <location>
        <begin position="145"/>
        <end position="146"/>
    </location>
    <ligand>
        <name>thiamine diphosphate</name>
        <dbReference type="ChEBI" id="CHEBI:58937"/>
    </ligand>
</feature>
<feature type="binding site" evidence="1">
    <location>
        <position position="174"/>
    </location>
    <ligand>
        <name>Mg(2+)</name>
        <dbReference type="ChEBI" id="CHEBI:18420"/>
    </ligand>
</feature>
<feature type="binding site" evidence="1">
    <location>
        <position position="174"/>
    </location>
    <ligand>
        <name>thiamine diphosphate</name>
        <dbReference type="ChEBI" id="CHEBI:58937"/>
    </ligand>
</feature>
<feature type="binding site" evidence="1">
    <location>
        <position position="287"/>
    </location>
    <ligand>
        <name>thiamine diphosphate</name>
        <dbReference type="ChEBI" id="CHEBI:58937"/>
    </ligand>
</feature>
<feature type="binding site" evidence="1">
    <location>
        <position position="370"/>
    </location>
    <ligand>
        <name>thiamine diphosphate</name>
        <dbReference type="ChEBI" id="CHEBI:58937"/>
    </ligand>
</feature>
<gene>
    <name evidence="1" type="primary">dxs</name>
    <name type="ordered locus">tll0623</name>
</gene>
<protein>
    <recommendedName>
        <fullName evidence="1">1-deoxy-D-xylulose-5-phosphate synthase</fullName>
        <ecNumber evidence="1">2.2.1.7</ecNumber>
    </recommendedName>
    <alternativeName>
        <fullName evidence="1">1-deoxyxylulose-5-phosphate synthase</fullName>
        <shortName evidence="1">DXP synthase</shortName>
        <shortName evidence="1">DXPS</shortName>
    </alternativeName>
</protein>
<accession>Q8DL74</accession>
<dbReference type="EC" id="2.2.1.7" evidence="1"/>
<dbReference type="EMBL" id="BA000039">
    <property type="protein sequence ID" value="BAC08174.1"/>
    <property type="status" value="ALT_INIT"/>
    <property type="molecule type" value="Genomic_DNA"/>
</dbReference>
<dbReference type="RefSeq" id="NP_681412.2">
    <property type="nucleotide sequence ID" value="NC_004113.1"/>
</dbReference>
<dbReference type="RefSeq" id="WP_011056470.1">
    <property type="nucleotide sequence ID" value="NC_004113.1"/>
</dbReference>
<dbReference type="SMR" id="Q8DL74"/>
<dbReference type="STRING" id="197221.gene:10747212"/>
<dbReference type="EnsemblBacteria" id="BAC08174">
    <property type="protein sequence ID" value="BAC08174"/>
    <property type="gene ID" value="BAC08174"/>
</dbReference>
<dbReference type="KEGG" id="tel:tll0623"/>
<dbReference type="PATRIC" id="fig|197221.4.peg.662"/>
<dbReference type="eggNOG" id="COG1154">
    <property type="taxonomic scope" value="Bacteria"/>
</dbReference>
<dbReference type="UniPathway" id="UPA00064">
    <property type="reaction ID" value="UER00091"/>
</dbReference>
<dbReference type="Proteomes" id="UP000000440">
    <property type="component" value="Chromosome"/>
</dbReference>
<dbReference type="GO" id="GO:0005829">
    <property type="term" value="C:cytosol"/>
    <property type="evidence" value="ECO:0007669"/>
    <property type="project" value="TreeGrafter"/>
</dbReference>
<dbReference type="GO" id="GO:0008661">
    <property type="term" value="F:1-deoxy-D-xylulose-5-phosphate synthase activity"/>
    <property type="evidence" value="ECO:0007669"/>
    <property type="project" value="UniProtKB-UniRule"/>
</dbReference>
<dbReference type="GO" id="GO:0000287">
    <property type="term" value="F:magnesium ion binding"/>
    <property type="evidence" value="ECO:0007669"/>
    <property type="project" value="UniProtKB-UniRule"/>
</dbReference>
<dbReference type="GO" id="GO:0030976">
    <property type="term" value="F:thiamine pyrophosphate binding"/>
    <property type="evidence" value="ECO:0007669"/>
    <property type="project" value="UniProtKB-UniRule"/>
</dbReference>
<dbReference type="GO" id="GO:0052865">
    <property type="term" value="P:1-deoxy-D-xylulose 5-phosphate biosynthetic process"/>
    <property type="evidence" value="ECO:0007669"/>
    <property type="project" value="UniProtKB-UniPathway"/>
</dbReference>
<dbReference type="GO" id="GO:0019288">
    <property type="term" value="P:isopentenyl diphosphate biosynthetic process, methylerythritol 4-phosphate pathway"/>
    <property type="evidence" value="ECO:0007669"/>
    <property type="project" value="TreeGrafter"/>
</dbReference>
<dbReference type="GO" id="GO:0016114">
    <property type="term" value="P:terpenoid biosynthetic process"/>
    <property type="evidence" value="ECO:0007669"/>
    <property type="project" value="UniProtKB-UniRule"/>
</dbReference>
<dbReference type="GO" id="GO:0009228">
    <property type="term" value="P:thiamine biosynthetic process"/>
    <property type="evidence" value="ECO:0007669"/>
    <property type="project" value="UniProtKB-UniRule"/>
</dbReference>
<dbReference type="CDD" id="cd02007">
    <property type="entry name" value="TPP_DXS"/>
    <property type="match status" value="1"/>
</dbReference>
<dbReference type="CDD" id="cd07033">
    <property type="entry name" value="TPP_PYR_DXS_TK_like"/>
    <property type="match status" value="1"/>
</dbReference>
<dbReference type="FunFam" id="3.40.50.920:FF:000002">
    <property type="entry name" value="1-deoxy-D-xylulose-5-phosphate synthase"/>
    <property type="match status" value="1"/>
</dbReference>
<dbReference type="FunFam" id="3.40.50.970:FF:000005">
    <property type="entry name" value="1-deoxy-D-xylulose-5-phosphate synthase"/>
    <property type="match status" value="1"/>
</dbReference>
<dbReference type="Gene3D" id="3.40.50.920">
    <property type="match status" value="1"/>
</dbReference>
<dbReference type="Gene3D" id="3.40.50.970">
    <property type="match status" value="2"/>
</dbReference>
<dbReference type="HAMAP" id="MF_00315">
    <property type="entry name" value="DXP_synth"/>
    <property type="match status" value="1"/>
</dbReference>
<dbReference type="InterPro" id="IPR005477">
    <property type="entry name" value="Dxylulose-5-P_synthase"/>
</dbReference>
<dbReference type="InterPro" id="IPR029061">
    <property type="entry name" value="THDP-binding"/>
</dbReference>
<dbReference type="InterPro" id="IPR009014">
    <property type="entry name" value="Transketo_C/PFOR_II"/>
</dbReference>
<dbReference type="InterPro" id="IPR005475">
    <property type="entry name" value="Transketolase-like_Pyr-bd"/>
</dbReference>
<dbReference type="InterPro" id="IPR020826">
    <property type="entry name" value="Transketolase_BS"/>
</dbReference>
<dbReference type="InterPro" id="IPR033248">
    <property type="entry name" value="Transketolase_C"/>
</dbReference>
<dbReference type="InterPro" id="IPR049557">
    <property type="entry name" value="Transketolase_CS"/>
</dbReference>
<dbReference type="NCBIfam" id="TIGR00204">
    <property type="entry name" value="dxs"/>
    <property type="match status" value="1"/>
</dbReference>
<dbReference type="NCBIfam" id="NF003933">
    <property type="entry name" value="PRK05444.2-2"/>
    <property type="match status" value="1"/>
</dbReference>
<dbReference type="PANTHER" id="PTHR43322">
    <property type="entry name" value="1-D-DEOXYXYLULOSE 5-PHOSPHATE SYNTHASE-RELATED"/>
    <property type="match status" value="1"/>
</dbReference>
<dbReference type="PANTHER" id="PTHR43322:SF5">
    <property type="entry name" value="1-DEOXY-D-XYLULOSE-5-PHOSPHATE SYNTHASE, CHLOROPLASTIC"/>
    <property type="match status" value="1"/>
</dbReference>
<dbReference type="Pfam" id="PF13292">
    <property type="entry name" value="DXP_synthase_N"/>
    <property type="match status" value="1"/>
</dbReference>
<dbReference type="Pfam" id="PF02779">
    <property type="entry name" value="Transket_pyr"/>
    <property type="match status" value="1"/>
</dbReference>
<dbReference type="Pfam" id="PF02780">
    <property type="entry name" value="Transketolase_C"/>
    <property type="match status" value="1"/>
</dbReference>
<dbReference type="SMART" id="SM00861">
    <property type="entry name" value="Transket_pyr"/>
    <property type="match status" value="1"/>
</dbReference>
<dbReference type="SUPFAM" id="SSF52518">
    <property type="entry name" value="Thiamin diphosphate-binding fold (THDP-binding)"/>
    <property type="match status" value="2"/>
</dbReference>
<dbReference type="SUPFAM" id="SSF52922">
    <property type="entry name" value="TK C-terminal domain-like"/>
    <property type="match status" value="1"/>
</dbReference>
<dbReference type="PROSITE" id="PS00801">
    <property type="entry name" value="TRANSKETOLASE_1"/>
    <property type="match status" value="1"/>
</dbReference>
<dbReference type="PROSITE" id="PS00802">
    <property type="entry name" value="TRANSKETOLASE_2"/>
    <property type="match status" value="1"/>
</dbReference>
<comment type="function">
    <text evidence="1">Catalyzes the acyloin condensation reaction between C atoms 2 and 3 of pyruvate and glyceraldehyde 3-phosphate to yield 1-deoxy-D-xylulose-5-phosphate (DXP).</text>
</comment>
<comment type="catalytic activity">
    <reaction evidence="1">
        <text>D-glyceraldehyde 3-phosphate + pyruvate + H(+) = 1-deoxy-D-xylulose 5-phosphate + CO2</text>
        <dbReference type="Rhea" id="RHEA:12605"/>
        <dbReference type="ChEBI" id="CHEBI:15361"/>
        <dbReference type="ChEBI" id="CHEBI:15378"/>
        <dbReference type="ChEBI" id="CHEBI:16526"/>
        <dbReference type="ChEBI" id="CHEBI:57792"/>
        <dbReference type="ChEBI" id="CHEBI:59776"/>
        <dbReference type="EC" id="2.2.1.7"/>
    </reaction>
</comment>
<comment type="cofactor">
    <cofactor evidence="1">
        <name>Mg(2+)</name>
        <dbReference type="ChEBI" id="CHEBI:18420"/>
    </cofactor>
    <text evidence="1">Binds 1 Mg(2+) ion per subunit.</text>
</comment>
<comment type="cofactor">
    <cofactor evidence="1">
        <name>thiamine diphosphate</name>
        <dbReference type="ChEBI" id="CHEBI:58937"/>
    </cofactor>
    <text evidence="1">Binds 1 thiamine pyrophosphate per subunit.</text>
</comment>
<comment type="pathway">
    <text evidence="1">Metabolic intermediate biosynthesis; 1-deoxy-D-xylulose 5-phosphate biosynthesis; 1-deoxy-D-xylulose 5-phosphate from D-glyceraldehyde 3-phosphate and pyruvate: step 1/1.</text>
</comment>
<comment type="subunit">
    <text evidence="1">Homodimer.</text>
</comment>
<comment type="similarity">
    <text evidence="1">Belongs to the transketolase family. DXPS subfamily.</text>
</comment>
<comment type="sequence caution" evidence="2">
    <conflict type="erroneous initiation">
        <sequence resource="EMBL-CDS" id="BAC08174"/>
    </conflict>
</comment>
<sequence length="638" mass="69128">MHLSELTHPNQLHGLSIAQLTQIAAQIRDKHLETVAATGGHLGPGLGVVELTLALYQTLDLEKDRVVWDVGHQAYPHKMLTGRYNNFHTLRQKGGIAGYLNRRESPFDHFGAGHASTSISAALGMAIARDLKGENFKVVAIIGDGALTGGMALEAINHAGHLPHTNLMVVLNDNEMSISPNVGAIPRYLNKIRLSPQVQFITDNLEEQFKHIPFFGENLTPEMQRLKEGMKRLAVPKVGAVFEELGFTYVGPVDGHNLEELIATFQHAHTIPGPVLVHVATVKGKGYAIAEKDQVGYHAQNPFDLVTGKAKPSSKPKPPSYSKVFGETLTKLAENDPRIVGITAAMATGTGLDILQKRVPKQYIDVGIAEQHAVTMAAGMATQGMRPVAAIYSTFLQRAYDQIVHDVCIQKLPVFFCMDRAGIVGADGPTHQGMYDIAYLRCLPNMVLMAPKDEAELQRMIVTGINYTDGPIALRYPRGNGYGVALMEEGWEPLEIGKGELLRSGEDLLLVAYGSMVYPAMQVAEILKEHGMSAAVINARFAKPLDTELILPLAKQIGRVVTLEEGCLMGGFGSAVLEALQEADILVPVLRLGVPDILVEHASPDESKADLGLTPPQMAETIMQKFGVPQRATVVTAS</sequence>
<organism>
    <name type="scientific">Thermosynechococcus vestitus (strain NIES-2133 / IAM M-273 / BP-1)</name>
    <dbReference type="NCBI Taxonomy" id="197221"/>
    <lineage>
        <taxon>Bacteria</taxon>
        <taxon>Bacillati</taxon>
        <taxon>Cyanobacteriota</taxon>
        <taxon>Cyanophyceae</taxon>
        <taxon>Acaryochloridales</taxon>
        <taxon>Thermosynechococcaceae</taxon>
        <taxon>Thermosynechococcus</taxon>
    </lineage>
</organism>
<name>DXS_THEVB</name>
<reference key="1">
    <citation type="journal article" date="2002" name="DNA Res.">
        <title>Complete genome structure of the thermophilic cyanobacterium Thermosynechococcus elongatus BP-1.</title>
        <authorList>
            <person name="Nakamura Y."/>
            <person name="Kaneko T."/>
            <person name="Sato S."/>
            <person name="Ikeuchi M."/>
            <person name="Katoh H."/>
            <person name="Sasamoto S."/>
            <person name="Watanabe A."/>
            <person name="Iriguchi M."/>
            <person name="Kawashima K."/>
            <person name="Kimura T."/>
            <person name="Kishida Y."/>
            <person name="Kiyokawa C."/>
            <person name="Kohara M."/>
            <person name="Matsumoto M."/>
            <person name="Matsuno A."/>
            <person name="Nakazaki N."/>
            <person name="Shimpo S."/>
            <person name="Sugimoto M."/>
            <person name="Takeuchi C."/>
            <person name="Yamada M."/>
            <person name="Tabata S."/>
        </authorList>
    </citation>
    <scope>NUCLEOTIDE SEQUENCE [LARGE SCALE GENOMIC DNA]</scope>
    <source>
        <strain>NIES-2133 / IAM M-273 / BP-1</strain>
    </source>
</reference>
<keyword id="KW-0414">Isoprene biosynthesis</keyword>
<keyword id="KW-0460">Magnesium</keyword>
<keyword id="KW-0479">Metal-binding</keyword>
<keyword id="KW-1185">Reference proteome</keyword>
<keyword id="KW-0784">Thiamine biosynthesis</keyword>
<keyword id="KW-0786">Thiamine pyrophosphate</keyword>
<keyword id="KW-0808">Transferase</keyword>
<proteinExistence type="inferred from homology"/>
<evidence type="ECO:0000255" key="1">
    <source>
        <dbReference type="HAMAP-Rule" id="MF_00315"/>
    </source>
</evidence>
<evidence type="ECO:0000305" key="2"/>